<reference key="1">
    <citation type="journal article" date="1999" name="Genomics">
        <title>Identification of candidate Drosophila olfactory receptors from genomic DNA sequence.</title>
        <authorList>
            <person name="Gao Q."/>
            <person name="Chess A."/>
        </authorList>
    </citation>
    <scope>NUCLEOTIDE SEQUENCE [GENOMIC DNA]</scope>
</reference>
<reference key="2">
    <citation type="journal article" date="2000" name="Science">
        <title>The genome sequence of Drosophila melanogaster.</title>
        <authorList>
            <person name="Adams M.D."/>
            <person name="Celniker S.E."/>
            <person name="Holt R.A."/>
            <person name="Evans C.A."/>
            <person name="Gocayne J.D."/>
            <person name="Amanatides P.G."/>
            <person name="Scherer S.E."/>
            <person name="Li P.W."/>
            <person name="Hoskins R.A."/>
            <person name="Galle R.F."/>
            <person name="George R.A."/>
            <person name="Lewis S.E."/>
            <person name="Richards S."/>
            <person name="Ashburner M."/>
            <person name="Henderson S.N."/>
            <person name="Sutton G.G."/>
            <person name="Wortman J.R."/>
            <person name="Yandell M.D."/>
            <person name="Zhang Q."/>
            <person name="Chen L.X."/>
            <person name="Brandon R.C."/>
            <person name="Rogers Y.-H.C."/>
            <person name="Blazej R.G."/>
            <person name="Champe M."/>
            <person name="Pfeiffer B.D."/>
            <person name="Wan K.H."/>
            <person name="Doyle C."/>
            <person name="Baxter E.G."/>
            <person name="Helt G."/>
            <person name="Nelson C.R."/>
            <person name="Miklos G.L.G."/>
            <person name="Abril J.F."/>
            <person name="Agbayani A."/>
            <person name="An H.-J."/>
            <person name="Andrews-Pfannkoch C."/>
            <person name="Baldwin D."/>
            <person name="Ballew R.M."/>
            <person name="Basu A."/>
            <person name="Baxendale J."/>
            <person name="Bayraktaroglu L."/>
            <person name="Beasley E.M."/>
            <person name="Beeson K.Y."/>
            <person name="Benos P.V."/>
            <person name="Berman B.P."/>
            <person name="Bhandari D."/>
            <person name="Bolshakov S."/>
            <person name="Borkova D."/>
            <person name="Botchan M.R."/>
            <person name="Bouck J."/>
            <person name="Brokstein P."/>
            <person name="Brottier P."/>
            <person name="Burtis K.C."/>
            <person name="Busam D.A."/>
            <person name="Butler H."/>
            <person name="Cadieu E."/>
            <person name="Center A."/>
            <person name="Chandra I."/>
            <person name="Cherry J.M."/>
            <person name="Cawley S."/>
            <person name="Dahlke C."/>
            <person name="Davenport L.B."/>
            <person name="Davies P."/>
            <person name="de Pablos B."/>
            <person name="Delcher A."/>
            <person name="Deng Z."/>
            <person name="Mays A.D."/>
            <person name="Dew I."/>
            <person name="Dietz S.M."/>
            <person name="Dodson K."/>
            <person name="Doup L.E."/>
            <person name="Downes M."/>
            <person name="Dugan-Rocha S."/>
            <person name="Dunkov B.C."/>
            <person name="Dunn P."/>
            <person name="Durbin K.J."/>
            <person name="Evangelista C.C."/>
            <person name="Ferraz C."/>
            <person name="Ferriera S."/>
            <person name="Fleischmann W."/>
            <person name="Fosler C."/>
            <person name="Gabrielian A.E."/>
            <person name="Garg N.S."/>
            <person name="Gelbart W.M."/>
            <person name="Glasser K."/>
            <person name="Glodek A."/>
            <person name="Gong F."/>
            <person name="Gorrell J.H."/>
            <person name="Gu Z."/>
            <person name="Guan P."/>
            <person name="Harris M."/>
            <person name="Harris N.L."/>
            <person name="Harvey D.A."/>
            <person name="Heiman T.J."/>
            <person name="Hernandez J.R."/>
            <person name="Houck J."/>
            <person name="Hostin D."/>
            <person name="Houston K.A."/>
            <person name="Howland T.J."/>
            <person name="Wei M.-H."/>
            <person name="Ibegwam C."/>
            <person name="Jalali M."/>
            <person name="Kalush F."/>
            <person name="Karpen G.H."/>
            <person name="Ke Z."/>
            <person name="Kennison J.A."/>
            <person name="Ketchum K.A."/>
            <person name="Kimmel B.E."/>
            <person name="Kodira C.D."/>
            <person name="Kraft C.L."/>
            <person name="Kravitz S."/>
            <person name="Kulp D."/>
            <person name="Lai Z."/>
            <person name="Lasko P."/>
            <person name="Lei Y."/>
            <person name="Levitsky A.A."/>
            <person name="Li J.H."/>
            <person name="Li Z."/>
            <person name="Liang Y."/>
            <person name="Lin X."/>
            <person name="Liu X."/>
            <person name="Mattei B."/>
            <person name="McIntosh T.C."/>
            <person name="McLeod M.P."/>
            <person name="McPherson D."/>
            <person name="Merkulov G."/>
            <person name="Milshina N.V."/>
            <person name="Mobarry C."/>
            <person name="Morris J."/>
            <person name="Moshrefi A."/>
            <person name="Mount S.M."/>
            <person name="Moy M."/>
            <person name="Murphy B."/>
            <person name="Murphy L."/>
            <person name="Muzny D.M."/>
            <person name="Nelson D.L."/>
            <person name="Nelson D.R."/>
            <person name="Nelson K.A."/>
            <person name="Nixon K."/>
            <person name="Nusskern D.R."/>
            <person name="Pacleb J.M."/>
            <person name="Palazzolo M."/>
            <person name="Pittman G.S."/>
            <person name="Pan S."/>
            <person name="Pollard J."/>
            <person name="Puri V."/>
            <person name="Reese M.G."/>
            <person name="Reinert K."/>
            <person name="Remington K."/>
            <person name="Saunders R.D.C."/>
            <person name="Scheeler F."/>
            <person name="Shen H."/>
            <person name="Shue B.C."/>
            <person name="Siden-Kiamos I."/>
            <person name="Simpson M."/>
            <person name="Skupski M.P."/>
            <person name="Smith T.J."/>
            <person name="Spier E."/>
            <person name="Spradling A.C."/>
            <person name="Stapleton M."/>
            <person name="Strong R."/>
            <person name="Sun E."/>
            <person name="Svirskas R."/>
            <person name="Tector C."/>
            <person name="Turner R."/>
            <person name="Venter E."/>
            <person name="Wang A.H."/>
            <person name="Wang X."/>
            <person name="Wang Z.-Y."/>
            <person name="Wassarman D.A."/>
            <person name="Weinstock G.M."/>
            <person name="Weissenbach J."/>
            <person name="Williams S.M."/>
            <person name="Woodage T."/>
            <person name="Worley K.C."/>
            <person name="Wu D."/>
            <person name="Yang S."/>
            <person name="Yao Q.A."/>
            <person name="Ye J."/>
            <person name="Yeh R.-F."/>
            <person name="Zaveri J.S."/>
            <person name="Zhan M."/>
            <person name="Zhang G."/>
            <person name="Zhao Q."/>
            <person name="Zheng L."/>
            <person name="Zheng X.H."/>
            <person name="Zhong F.N."/>
            <person name="Zhong W."/>
            <person name="Zhou X."/>
            <person name="Zhu S.C."/>
            <person name="Zhu X."/>
            <person name="Smith H.O."/>
            <person name="Gibbs R.A."/>
            <person name="Myers E.W."/>
            <person name="Rubin G.M."/>
            <person name="Venter J.C."/>
        </authorList>
    </citation>
    <scope>NUCLEOTIDE SEQUENCE [LARGE SCALE GENOMIC DNA]</scope>
    <source>
        <strain>Berkeley</strain>
    </source>
</reference>
<reference key="3">
    <citation type="journal article" date="2002" name="Genome Biol.">
        <title>Annotation of the Drosophila melanogaster euchromatic genome: a systematic review.</title>
        <authorList>
            <person name="Misra S."/>
            <person name="Crosby M.A."/>
            <person name="Mungall C.J."/>
            <person name="Matthews B.B."/>
            <person name="Campbell K.S."/>
            <person name="Hradecky P."/>
            <person name="Huang Y."/>
            <person name="Kaminker J.S."/>
            <person name="Millburn G.H."/>
            <person name="Prochnik S.E."/>
            <person name="Smith C.D."/>
            <person name="Tupy J.L."/>
            <person name="Whitfield E.J."/>
            <person name="Bayraktaroglu L."/>
            <person name="Berman B.P."/>
            <person name="Bettencourt B.R."/>
            <person name="Celniker S.E."/>
            <person name="de Grey A.D.N.J."/>
            <person name="Drysdale R.A."/>
            <person name="Harris N.L."/>
            <person name="Richter J."/>
            <person name="Russo S."/>
            <person name="Schroeder A.J."/>
            <person name="Shu S.Q."/>
            <person name="Stapleton M."/>
            <person name="Yamada C."/>
            <person name="Ashburner M."/>
            <person name="Gelbart W.M."/>
            <person name="Rubin G.M."/>
            <person name="Lewis S.E."/>
        </authorList>
    </citation>
    <scope>GENOME REANNOTATION</scope>
    <source>
        <strain>Berkeley</strain>
    </source>
</reference>
<reference key="4">
    <citation type="journal article" date="1999" name="Neuron">
        <title>A novel family of divergent seven-transmembrane proteins: candidate odorant receptors in Drosophila.</title>
        <authorList>
            <person name="Clyne P.J."/>
            <person name="Warr C.G."/>
            <person name="Freeman M.R."/>
            <person name="Lessing D."/>
            <person name="Kim J."/>
            <person name="Carlson J.R."/>
        </authorList>
    </citation>
    <scope>IDENTIFICATION</scope>
    <scope>TISSUE SPECIFICITY</scope>
</reference>
<reference key="5">
    <citation type="journal article" date="1999" name="Cell">
        <title>A spatial map of olfactory receptor expression in the Drosophila antenna.</title>
        <authorList>
            <person name="Vosshall L.B."/>
            <person name="Amrein H."/>
            <person name="Morozov P.S."/>
            <person name="Rzhetsky A."/>
            <person name="Axel R."/>
        </authorList>
    </citation>
    <scope>IDENTIFICATION</scope>
    <scope>TISSUE SPECIFICITY</scope>
    <source>
        <strain>Oregon-R</strain>
        <tissue>Antenna</tissue>
    </source>
</reference>
<reference key="6">
    <citation type="journal article" date="2000" name="Cell">
        <title>An olfactory sensory map in the fly brain.</title>
        <authorList>
            <person name="Vosshall L.B."/>
            <person name="Wong A.M."/>
            <person name="Axel R."/>
        </authorList>
    </citation>
    <scope>TISSUE SPECIFICITY</scope>
</reference>
<keyword id="KW-1003">Cell membrane</keyword>
<keyword id="KW-0472">Membrane</keyword>
<keyword id="KW-0552">Olfaction</keyword>
<keyword id="KW-0675">Receptor</keyword>
<keyword id="KW-1185">Reference proteome</keyword>
<keyword id="KW-0716">Sensory transduction</keyword>
<keyword id="KW-0807">Transducer</keyword>
<keyword id="KW-0812">Transmembrane</keyword>
<keyword id="KW-1133">Transmembrane helix</keyword>
<dbReference type="EMBL" id="AE014134">
    <property type="protein sequence ID" value="AAF53133.1"/>
    <property type="molecule type" value="Genomic_DNA"/>
</dbReference>
<dbReference type="RefSeq" id="NP_523555.1">
    <property type="nucleotide sequence ID" value="NM_078831.1"/>
</dbReference>
<dbReference type="SMR" id="P81916"/>
<dbReference type="FunCoup" id="P81916">
    <property type="interactions" value="44"/>
</dbReference>
<dbReference type="STRING" id="7227.FBpp0079864"/>
<dbReference type="PaxDb" id="7227-FBpp0079864"/>
<dbReference type="EnsemblMetazoa" id="FBtr0080280">
    <property type="protein sequence ID" value="FBpp0079864"/>
    <property type="gene ID" value="FBgn0026390"/>
</dbReference>
<dbReference type="GeneID" id="34603"/>
<dbReference type="KEGG" id="dme:Dmel_CG5006"/>
<dbReference type="AGR" id="FB:FBgn0026390"/>
<dbReference type="CTD" id="34603"/>
<dbReference type="FlyBase" id="FBgn0026390">
    <property type="gene designation" value="Or33c"/>
</dbReference>
<dbReference type="VEuPathDB" id="VectorBase:FBgn0026390"/>
<dbReference type="eggNOG" id="ENOG502TBPZ">
    <property type="taxonomic scope" value="Eukaryota"/>
</dbReference>
<dbReference type="GeneTree" id="ENSGT00540000073151"/>
<dbReference type="HOGENOM" id="CLU_033399_8_1_1"/>
<dbReference type="InParanoid" id="P81916"/>
<dbReference type="OMA" id="AIFSSRW"/>
<dbReference type="OrthoDB" id="5846619at2759"/>
<dbReference type="PhylomeDB" id="P81916"/>
<dbReference type="BioGRID-ORCS" id="34603">
    <property type="hits" value="0 hits in 1 CRISPR screen"/>
</dbReference>
<dbReference type="GenomeRNAi" id="34603"/>
<dbReference type="PRO" id="PR:P81916"/>
<dbReference type="Proteomes" id="UP000000803">
    <property type="component" value="Chromosome 2L"/>
</dbReference>
<dbReference type="Bgee" id="FBgn0026390">
    <property type="expression patterns" value="Expressed in maxillary palp olfactory receptor neuron (Drosophila) in proboscis and 2 other cell types or tissues"/>
</dbReference>
<dbReference type="GO" id="GO:0032590">
    <property type="term" value="C:dendrite membrane"/>
    <property type="evidence" value="ECO:0000250"/>
    <property type="project" value="FlyBase"/>
</dbReference>
<dbReference type="GO" id="GO:0016020">
    <property type="term" value="C:membrane"/>
    <property type="evidence" value="ECO:0000303"/>
    <property type="project" value="UniProtKB"/>
</dbReference>
<dbReference type="GO" id="GO:0005886">
    <property type="term" value="C:plasma membrane"/>
    <property type="evidence" value="ECO:0000255"/>
    <property type="project" value="FlyBase"/>
</dbReference>
<dbReference type="GO" id="GO:0170020">
    <property type="term" value="F:ionotropic olfactory receptor activity"/>
    <property type="evidence" value="ECO:0000255"/>
    <property type="project" value="FlyBase"/>
</dbReference>
<dbReference type="GO" id="GO:0005549">
    <property type="term" value="F:odorant binding"/>
    <property type="evidence" value="ECO:0000250"/>
    <property type="project" value="FlyBase"/>
</dbReference>
<dbReference type="GO" id="GO:0004984">
    <property type="term" value="F:olfactory receptor activity"/>
    <property type="evidence" value="ECO:0000318"/>
    <property type="project" value="GO_Central"/>
</dbReference>
<dbReference type="GO" id="GO:0050911">
    <property type="term" value="P:detection of chemical stimulus involved in sensory perception of smell"/>
    <property type="evidence" value="ECO:0000315"/>
    <property type="project" value="FlyBase"/>
</dbReference>
<dbReference type="GO" id="GO:0007608">
    <property type="term" value="P:sensory perception of smell"/>
    <property type="evidence" value="ECO:0000270"/>
    <property type="project" value="FlyBase"/>
</dbReference>
<dbReference type="GO" id="GO:0007165">
    <property type="term" value="P:signal transduction"/>
    <property type="evidence" value="ECO:0007669"/>
    <property type="project" value="UniProtKB-KW"/>
</dbReference>
<dbReference type="InterPro" id="IPR004117">
    <property type="entry name" value="7tm6_olfct_rcpt"/>
</dbReference>
<dbReference type="PANTHER" id="PTHR21137">
    <property type="entry name" value="ODORANT RECEPTOR"/>
    <property type="match status" value="1"/>
</dbReference>
<dbReference type="PANTHER" id="PTHR21137:SF35">
    <property type="entry name" value="ODORANT RECEPTOR 19A-RELATED"/>
    <property type="match status" value="1"/>
</dbReference>
<dbReference type="Pfam" id="PF02949">
    <property type="entry name" value="7tm_6"/>
    <property type="match status" value="1"/>
</dbReference>
<proteinExistence type="evidence at transcript level"/>
<gene>
    <name type="primary">Or33c</name>
    <name type="synonym">AN2</name>
    <name type="synonym">DOR33B.3</name>
    <name type="synonym">dor71</name>
    <name type="synonym">Or33B.3</name>
    <name type="ORF">CG5006</name>
</gene>
<name>OR33C_DROME</name>
<feature type="chain" id="PRO_0000174240" description="Odorant receptor 33c">
    <location>
        <begin position="1"/>
        <end position="384"/>
    </location>
</feature>
<feature type="topological domain" description="Cytoplasmic" evidence="2">
    <location>
        <begin position="1"/>
        <end position="35"/>
    </location>
</feature>
<feature type="transmembrane region" description="Helical; Name=1" evidence="2">
    <location>
        <begin position="36"/>
        <end position="56"/>
    </location>
</feature>
<feature type="topological domain" description="Extracellular" evidence="2">
    <location>
        <begin position="57"/>
        <end position="63"/>
    </location>
</feature>
<feature type="transmembrane region" description="Helical; Name=2" evidence="2">
    <location>
        <begin position="64"/>
        <end position="84"/>
    </location>
</feature>
<feature type="topological domain" description="Cytoplasmic" evidence="2">
    <location>
        <begin position="85"/>
        <end position="128"/>
    </location>
</feature>
<feature type="transmembrane region" description="Helical; Name=3" evidence="2">
    <location>
        <begin position="129"/>
        <end position="149"/>
    </location>
</feature>
<feature type="topological domain" description="Extracellular" evidence="2">
    <location>
        <begin position="150"/>
        <end position="169"/>
    </location>
</feature>
<feature type="transmembrane region" description="Helical; Name=4" evidence="2">
    <location>
        <begin position="170"/>
        <end position="190"/>
    </location>
</feature>
<feature type="topological domain" description="Cytoplasmic" evidence="2">
    <location>
        <begin position="191"/>
        <end position="251"/>
    </location>
</feature>
<feature type="transmembrane region" description="Helical; Name=5" evidence="2">
    <location>
        <begin position="252"/>
        <end position="272"/>
    </location>
</feature>
<feature type="topological domain" description="Extracellular" evidence="2">
    <location>
        <begin position="273"/>
        <end position="274"/>
    </location>
</feature>
<feature type="transmembrane region" description="Helical; Name=6" evidence="2">
    <location>
        <begin position="275"/>
        <end position="295"/>
    </location>
</feature>
<feature type="topological domain" description="Cytoplasmic" evidence="2">
    <location>
        <begin position="296"/>
        <end position="358"/>
    </location>
</feature>
<feature type="transmembrane region" description="Helical; Name=7" evidence="2">
    <location>
        <begin position="359"/>
        <end position="379"/>
    </location>
</feature>
<feature type="topological domain" description="Extracellular" evidence="2">
    <location>
        <begin position="380"/>
        <end position="384"/>
    </location>
</feature>
<comment type="function">
    <text evidence="1">Odorant receptor which mediates acceptance or avoidance behavior, depending on its substrates. The odorant receptor repertoire encodes a large collection of odor stimuli that vary widely in identity, intensity, and duration. May form a complex with Orco to form odorant-sensing units, providing sensitive and prolonged odorant signaling and calcium permeability (By similarity).</text>
</comment>
<comment type="subunit">
    <text evidence="1">Interacts with Orco. Complexes exist early in the endomembrane system in olfactory sensory neurons (OSNs), coupling these complexes to the conserved ciliary trafficking pathway (By similarity).</text>
</comment>
<comment type="subcellular location">
    <subcellularLocation>
        <location evidence="1">Cell membrane</location>
        <topology evidence="1">Multi-pass membrane protein</topology>
    </subcellularLocation>
</comment>
<comment type="tissue specificity">
    <text evidence="3 4 5">Expressed in the antenna and in a subset of 18 olfactory receptor neurons in the maxillary palp.</text>
</comment>
<comment type="miscellaneous">
    <text>The atypical heteromeric and topological design of the odorant receptors appears to be an insect-specific solution for odor recognition, making the OR/Orco complex an attractive target for the development of highly selective insect repellents to disrupt olfactory-mediated host-seeking behaviors of insect disease vectors. Odor-evoked OR currents are independent of known G-protein-coupled second messenger pathways.</text>
</comment>
<comment type="similarity">
    <text evidence="6">Belongs to the insect chemoreceptor superfamily. Heteromeric odorant receptor channel (TC 1.A.69) family. Or2a subfamily.</text>
</comment>
<organism>
    <name type="scientific">Drosophila melanogaster</name>
    <name type="common">Fruit fly</name>
    <dbReference type="NCBI Taxonomy" id="7227"/>
    <lineage>
        <taxon>Eukaryota</taxon>
        <taxon>Metazoa</taxon>
        <taxon>Ecdysozoa</taxon>
        <taxon>Arthropoda</taxon>
        <taxon>Hexapoda</taxon>
        <taxon>Insecta</taxon>
        <taxon>Pterygota</taxon>
        <taxon>Neoptera</taxon>
        <taxon>Endopterygota</taxon>
        <taxon>Diptera</taxon>
        <taxon>Brachycera</taxon>
        <taxon>Muscomorpha</taxon>
        <taxon>Ephydroidea</taxon>
        <taxon>Drosophilidae</taxon>
        <taxon>Drosophila</taxon>
        <taxon>Sophophora</taxon>
    </lineage>
</organism>
<accession>P81916</accession>
<sequence length="384" mass="44374">MVIIDSLSFYRPFWICMRLLVPTFFKDSSRPVQLYVVLLHILVTLWFPLHLLLHLLLLPSTAEFFKNLTMSLTCVACSLKHVAHLYHLPQIVEIESLIEQLDTFIASEQEHRYYRDHVHCHARRFTRCLYISFGMIYALFLFGVFVQVISGNWELLYPAYFPFDLESNRFLGAVALGYQVFSMLVEGFQGLGNDTYTPLTLCLLAGHVHLWSIRMGQLGYFDDETVVNHQRLLDYIEQHKLLVRFHNLVSRTISEVQLVQLGGCGATLCIIVSYMLFFVGDTISLVYYLVFFGVVCVQLFPSCYFASEVAEELERLPYAIFSSRWYDQSRDHRFDLLIFTQLTLGNRGWIIKAGGLIELNLNAFFATLKMAYSLFAVVVRAKGI</sequence>
<protein>
    <recommendedName>
        <fullName>Odorant receptor 33c</fullName>
    </recommendedName>
</protein>
<evidence type="ECO:0000250" key="1"/>
<evidence type="ECO:0000255" key="2"/>
<evidence type="ECO:0000269" key="3">
    <source>
    </source>
</evidence>
<evidence type="ECO:0000269" key="4">
    <source>
    </source>
</evidence>
<evidence type="ECO:0000269" key="5">
    <source>
    </source>
</evidence>
<evidence type="ECO:0000305" key="6"/>